<feature type="initiator methionine" description="Removed" evidence="2">
    <location>
        <position position="1"/>
    </location>
</feature>
<feature type="chain" id="PRO_0000251806" description="NADH dehydrogenase [ubiquinone] 1 alpha subcomplex subunit 7">
    <location>
        <begin position="2"/>
        <end position="113"/>
    </location>
</feature>
<feature type="region of interest" description="Disordered" evidence="4">
    <location>
        <begin position="32"/>
        <end position="51"/>
    </location>
</feature>
<feature type="modified residue" description="N-acetylalanine" evidence="2">
    <location>
        <position position="2"/>
    </location>
</feature>
<feature type="modified residue" description="N6-acetyllysine" evidence="3">
    <location>
        <position position="40"/>
    </location>
</feature>
<feature type="modified residue" description="Phosphothreonine" evidence="1">
    <location>
        <position position="96"/>
    </location>
</feature>
<dbReference type="EMBL" id="DQ885726">
    <property type="protein sequence ID" value="ABH12235.1"/>
    <property type="status" value="ALT_INIT"/>
    <property type="molecule type" value="mRNA"/>
</dbReference>
<dbReference type="RefSeq" id="NP_001073395.1">
    <property type="nucleotide sequence ID" value="NM_001079926.1"/>
</dbReference>
<dbReference type="SMR" id="Q0MQA8"/>
<dbReference type="FunCoup" id="Q0MQA8">
    <property type="interactions" value="946"/>
</dbReference>
<dbReference type="STRING" id="9598.ENSPTRP00000017727"/>
<dbReference type="PaxDb" id="9598-ENSPTRP00000017727"/>
<dbReference type="Ensembl" id="ENSPTRT00000019151.4">
    <property type="protein sequence ID" value="ENSPTRP00000017727.4"/>
    <property type="gene ID" value="ENSPTRG00000010418.5"/>
</dbReference>
<dbReference type="GeneID" id="743262"/>
<dbReference type="KEGG" id="ptr:743262"/>
<dbReference type="CTD" id="4701"/>
<dbReference type="VGNC" id="VGNC:110025">
    <property type="gene designation" value="NDUFA7"/>
</dbReference>
<dbReference type="eggNOG" id="KOG4630">
    <property type="taxonomic scope" value="Eukaryota"/>
</dbReference>
<dbReference type="GeneTree" id="ENSGT00390000006553"/>
<dbReference type="InParanoid" id="Q0MQA8"/>
<dbReference type="OMA" id="ANYYFTR"/>
<dbReference type="OrthoDB" id="16458at9604"/>
<dbReference type="Proteomes" id="UP000002277">
    <property type="component" value="Chromosome 19"/>
</dbReference>
<dbReference type="Bgee" id="ENSPTRG00000010418">
    <property type="expression patterns" value="Expressed in hindlimb stylopod muscle and 21 other cell types or tissues"/>
</dbReference>
<dbReference type="GO" id="GO:0005743">
    <property type="term" value="C:mitochondrial inner membrane"/>
    <property type="evidence" value="ECO:0007669"/>
    <property type="project" value="UniProtKB-SubCell"/>
</dbReference>
<dbReference type="GO" id="GO:0045271">
    <property type="term" value="C:respiratory chain complex I"/>
    <property type="evidence" value="ECO:0000250"/>
    <property type="project" value="UniProtKB"/>
</dbReference>
<dbReference type="GO" id="GO:0006120">
    <property type="term" value="P:mitochondrial electron transport, NADH to ubiquinone"/>
    <property type="evidence" value="ECO:0000318"/>
    <property type="project" value="GO_Central"/>
</dbReference>
<dbReference type="InterPro" id="IPR009947">
    <property type="entry name" value="NDUA7"/>
</dbReference>
<dbReference type="PANTHER" id="PTHR12485:SF1">
    <property type="entry name" value="NADH DEHYDROGENASE [UBIQUINONE] 1 ALPHA SUBCOMPLEX SUBUNIT 7"/>
    <property type="match status" value="1"/>
</dbReference>
<dbReference type="PANTHER" id="PTHR12485">
    <property type="entry name" value="NADH-UBIQUINONE OXIDOREDUCTASE SUBUNIT B"/>
    <property type="match status" value="1"/>
</dbReference>
<dbReference type="Pfam" id="PF07347">
    <property type="entry name" value="CI-B14_5a"/>
    <property type="match status" value="1"/>
</dbReference>
<gene>
    <name type="primary">NDUFA7</name>
</gene>
<organism>
    <name type="scientific">Pan troglodytes</name>
    <name type="common">Chimpanzee</name>
    <dbReference type="NCBI Taxonomy" id="9598"/>
    <lineage>
        <taxon>Eukaryota</taxon>
        <taxon>Metazoa</taxon>
        <taxon>Chordata</taxon>
        <taxon>Craniata</taxon>
        <taxon>Vertebrata</taxon>
        <taxon>Euteleostomi</taxon>
        <taxon>Mammalia</taxon>
        <taxon>Eutheria</taxon>
        <taxon>Euarchontoglires</taxon>
        <taxon>Primates</taxon>
        <taxon>Haplorrhini</taxon>
        <taxon>Catarrhini</taxon>
        <taxon>Hominidae</taxon>
        <taxon>Pan</taxon>
    </lineage>
</organism>
<reference key="1">
    <citation type="journal article" date="2006" name="Gene">
        <title>Adaptive selection of mitochondrial complex I subunits during primate radiation.</title>
        <authorList>
            <person name="Mishmar D."/>
            <person name="Ruiz-Pesini E."/>
            <person name="Mondragon-Palomino M."/>
            <person name="Procaccio V."/>
            <person name="Gaut B."/>
            <person name="Wallace D.C."/>
        </authorList>
    </citation>
    <scope>NUCLEOTIDE SEQUENCE [MRNA]</scope>
</reference>
<accession>Q0MQA8</accession>
<proteinExistence type="inferred from homology"/>
<keyword id="KW-0007">Acetylation</keyword>
<keyword id="KW-0249">Electron transport</keyword>
<keyword id="KW-0472">Membrane</keyword>
<keyword id="KW-0496">Mitochondrion</keyword>
<keyword id="KW-0999">Mitochondrion inner membrane</keyword>
<keyword id="KW-0597">Phosphoprotein</keyword>
<keyword id="KW-1185">Reference proteome</keyword>
<keyword id="KW-0679">Respiratory chain</keyword>
<keyword id="KW-0813">Transport</keyword>
<comment type="function">
    <text evidence="1">Accessory subunit of the mitochondrial membrane respiratory chain NADH dehydrogenase (Complex I), that is believed not to be involved in catalysis. Complex I functions in the transfer of electrons from NADH to the respiratory chain. The immediate electron acceptor for the enzyme is believed to be ubiquinone.</text>
</comment>
<comment type="subunit">
    <text evidence="1">Complex I is composed of 45 different subunits.</text>
</comment>
<comment type="subcellular location">
    <subcellularLocation>
        <location evidence="1">Mitochondrion inner membrane</location>
        <topology evidence="1">Peripheral membrane protein</topology>
        <orientation evidence="1">Matrix side</orientation>
    </subcellularLocation>
</comment>
<comment type="similarity">
    <text evidence="5">Belongs to the complex I NDUFA7 subunit family.</text>
</comment>
<comment type="sequence caution" evidence="5">
    <conflict type="erroneous initiation">
        <sequence resource="EMBL-CDS" id="ABH12235"/>
    </conflict>
</comment>
<name>NDUA7_PANTR</name>
<protein>
    <recommendedName>
        <fullName>NADH dehydrogenase [ubiquinone] 1 alpha subcomplex subunit 7</fullName>
    </recommendedName>
    <alternativeName>
        <fullName>Complex I-B14.5a</fullName>
        <shortName>CI-B14.5a</shortName>
    </alternativeName>
    <alternativeName>
        <fullName>NADH-ubiquinone oxidoreductase subunit B14.5a</fullName>
    </alternativeName>
</protein>
<evidence type="ECO:0000250" key="1">
    <source>
        <dbReference type="UniProtKB" id="O95182"/>
    </source>
</evidence>
<evidence type="ECO:0000250" key="2">
    <source>
        <dbReference type="UniProtKB" id="Q05752"/>
    </source>
</evidence>
<evidence type="ECO:0000250" key="3">
    <source>
        <dbReference type="UniProtKB" id="Q9Z1P6"/>
    </source>
</evidence>
<evidence type="ECO:0000256" key="4">
    <source>
        <dbReference type="SAM" id="MobiDB-lite"/>
    </source>
</evidence>
<evidence type="ECO:0000305" key="5"/>
<sequence>MASATRLIQRLRNWASGHDLQGKLQLRYQEISKRTQPPPKLPVGPSHKLSNNYYCTRDGRRESVPPSIIMSSQKALVSGKPAESSAVAATEKKAVTPAPPIKRWELSSDQPYL</sequence>